<protein>
    <recommendedName>
        <fullName>Ephrin type-A receptor 5</fullName>
        <ecNumber>2.7.10.1</ecNumber>
    </recommendedName>
    <alternativeName>
        <fullName>EPH homology kinase 1</fullName>
        <shortName>EHK-1</shortName>
    </alternativeName>
</protein>
<accession>P54757</accession>
<name>EPHA5_RAT</name>
<proteinExistence type="evidence at protein level"/>
<sequence>MRGSGPRGAGRRRTQGRGGGGDTPRVPASLAGCYSAPLKGPLWTCLLLCAALRTLLASPSNEVNLLDSRTVLGDLGWIAFPKNGWEEIGEVDENYAPIHTYQVCKVMEQNQNNWLLTSWISNEGASRIFIELKFTLRDCNSLPGGLGTCKETFNMYYFESDDENGRNIKDNQYIKIDTIAADESFTELDLGDRVMKLNTEVRDVGPLSKKGFYLAFQDVGACIALVSVRVYYKKCPSVVRHLAVFPDTITGADSSQLLEVSGSCVNHSVTDDPPKMHCSAEGEWLVPIGKCMCKAGYEEKNGTCQVCRPGFFKASPHSQTCSKCPPHSYTHEEASTSCVCEKDYFRRESDPPTMACTRPPSAPRNAISNVNETSVFLEWIPPADTGGGKDVSYYILCKKCNSHAGVCEECGGHVRYLPQQIGLKNTSVMMADPLAHTNYTFEIEAVNGVSDLSPGTRQYVSVNVTTNQAAPSPVTNVKKGKIAKNSISLSWQEPDRPNGIILEYEIKYFEKDQETSYTIIKSKETTITAEGLKPASVYVFQIRARTAAGYGVFSRRFEFETTPVFGASNDQSQIPIIGVSVTVGVILLAVMIGFLLSGSCCECGCGRASSLCAVAHPSLIWRCGYSKAKQDPEEEKMHFHNGHIKLPGVRTYIDPHTYEDPTQAVHEFGKEIEASCITIERVIGAGEFGEVCSGRLKLPGKRELPVATKTLKVGYTEKQRRDFLSEASIMGQFDHPNIIHLEGVVTKSKPVMIVTEYMENGSLDTFLKKNDGQFTVIQLVGMLRGIAAGMKYLSDMGYVHRDLAARNILINSNLVCKVSDFGLSRVLEDDPEAAYTTRGGKIPIRWTAPEAIAFRKFTSASDVWSYGIVMWEVVSYGERPYWEMTNQDVIKAVEEGYRLPSPMDCPAALYQLMLDCWQKDRNSRPKFDDIVNMLDKLIRNPSSLKTLVNASSRVSTLLAEHGSLGSGAYRSVGEWLEATKMGRYTEIFMENGYSSMDAVAQVTLE</sequence>
<organism>
    <name type="scientific">Rattus norvegicus</name>
    <name type="common">Rat</name>
    <dbReference type="NCBI Taxonomy" id="10116"/>
    <lineage>
        <taxon>Eukaryota</taxon>
        <taxon>Metazoa</taxon>
        <taxon>Chordata</taxon>
        <taxon>Craniata</taxon>
        <taxon>Vertebrata</taxon>
        <taxon>Euteleostomi</taxon>
        <taxon>Mammalia</taxon>
        <taxon>Eutheria</taxon>
        <taxon>Euarchontoglires</taxon>
        <taxon>Glires</taxon>
        <taxon>Rodentia</taxon>
        <taxon>Myomorpha</taxon>
        <taxon>Muroidea</taxon>
        <taxon>Muridae</taxon>
        <taxon>Murinae</taxon>
        <taxon>Rattus</taxon>
    </lineage>
</organism>
<keyword id="KW-0025">Alternative splicing</keyword>
<keyword id="KW-0067">ATP-binding</keyword>
<keyword id="KW-1003">Cell membrane</keyword>
<keyword id="KW-0966">Cell projection</keyword>
<keyword id="KW-0325">Glycoprotein</keyword>
<keyword id="KW-0418">Kinase</keyword>
<keyword id="KW-0472">Membrane</keyword>
<keyword id="KW-0524">Neurogenesis</keyword>
<keyword id="KW-0547">Nucleotide-binding</keyword>
<keyword id="KW-0597">Phosphoprotein</keyword>
<keyword id="KW-0675">Receptor</keyword>
<keyword id="KW-1185">Reference proteome</keyword>
<keyword id="KW-0677">Repeat</keyword>
<keyword id="KW-0732">Signal</keyword>
<keyword id="KW-0808">Transferase</keyword>
<keyword id="KW-0812">Transmembrane</keyword>
<keyword id="KW-1133">Transmembrane helix</keyword>
<keyword id="KW-0829">Tyrosine-protein kinase</keyword>
<dbReference type="EC" id="2.7.10.1"/>
<dbReference type="EMBL" id="X78689">
    <property type="protein sequence ID" value="CAA55357.1"/>
    <property type="status" value="ALT_FRAME"/>
    <property type="molecule type" value="mRNA"/>
</dbReference>
<dbReference type="PIR" id="PT0186">
    <property type="entry name" value="PT0186"/>
</dbReference>
<dbReference type="PIR" id="S47489">
    <property type="entry name" value="S47489"/>
</dbReference>
<dbReference type="PIR" id="S49015">
    <property type="entry name" value="S49015"/>
</dbReference>
<dbReference type="PIR" id="S51603">
    <property type="entry name" value="S51603"/>
</dbReference>
<dbReference type="PIR" id="S51604">
    <property type="entry name" value="S51604"/>
</dbReference>
<dbReference type="RefSeq" id="NP_077343.1">
    <property type="nucleotide sequence ID" value="NM_024367.1"/>
</dbReference>
<dbReference type="SMR" id="P54757"/>
<dbReference type="FunCoup" id="P54757">
    <property type="interactions" value="2724"/>
</dbReference>
<dbReference type="STRING" id="10116.ENSRNOP00000002793"/>
<dbReference type="BindingDB" id="P54757"/>
<dbReference type="ChEMBL" id="CHEMBL4739679"/>
<dbReference type="GuidetoPHARMACOLOGY" id="1825"/>
<dbReference type="GlyCosmos" id="P54757">
    <property type="glycosylation" value="6 sites, No reported glycans"/>
</dbReference>
<dbReference type="GlyGen" id="P54757">
    <property type="glycosylation" value="7 sites"/>
</dbReference>
<dbReference type="iPTMnet" id="P54757"/>
<dbReference type="PhosphoSitePlus" id="P54757"/>
<dbReference type="SwissPalm" id="P54757"/>
<dbReference type="jPOST" id="P54757"/>
<dbReference type="PaxDb" id="10116-ENSRNOP00000002793"/>
<dbReference type="GeneID" id="79208"/>
<dbReference type="KEGG" id="rno:79208"/>
<dbReference type="UCSC" id="RGD:620831">
    <molecule id="P54757-1"/>
    <property type="organism name" value="rat"/>
</dbReference>
<dbReference type="AGR" id="RGD:620831"/>
<dbReference type="CTD" id="2044"/>
<dbReference type="RGD" id="620831">
    <property type="gene designation" value="Epha5"/>
</dbReference>
<dbReference type="eggNOG" id="KOG0196">
    <property type="taxonomic scope" value="Eukaryota"/>
</dbReference>
<dbReference type="InParanoid" id="P54757"/>
<dbReference type="PhylomeDB" id="P54757"/>
<dbReference type="BRENDA" id="2.7.10.1">
    <property type="organism ID" value="5301"/>
</dbReference>
<dbReference type="Reactome" id="R-RNO-2682334">
    <property type="pathway name" value="EPH-Ephrin signaling"/>
</dbReference>
<dbReference type="Reactome" id="R-RNO-3928663">
    <property type="pathway name" value="EPHA-mediated growth cone collapse"/>
</dbReference>
<dbReference type="Reactome" id="R-RNO-3928665">
    <property type="pathway name" value="EPH-ephrin mediated repulsion of cells"/>
</dbReference>
<dbReference type="PRO" id="PR:P54757"/>
<dbReference type="Proteomes" id="UP000002494">
    <property type="component" value="Unplaced"/>
</dbReference>
<dbReference type="GO" id="GO:0005912">
    <property type="term" value="C:adherens junction"/>
    <property type="evidence" value="ECO:0000266"/>
    <property type="project" value="RGD"/>
</dbReference>
<dbReference type="GO" id="GO:0030424">
    <property type="term" value="C:axon"/>
    <property type="evidence" value="ECO:0000314"/>
    <property type="project" value="UniProtKB"/>
</dbReference>
<dbReference type="GO" id="GO:0071944">
    <property type="term" value="C:cell periphery"/>
    <property type="evidence" value="ECO:0000266"/>
    <property type="project" value="RGD"/>
</dbReference>
<dbReference type="GO" id="GO:0030425">
    <property type="term" value="C:dendrite"/>
    <property type="evidence" value="ECO:0000250"/>
    <property type="project" value="UniProtKB"/>
</dbReference>
<dbReference type="GO" id="GO:0009897">
    <property type="term" value="C:external side of plasma membrane"/>
    <property type="evidence" value="ECO:0000266"/>
    <property type="project" value="RGD"/>
</dbReference>
<dbReference type="GO" id="GO:0043025">
    <property type="term" value="C:neuronal cell body"/>
    <property type="evidence" value="ECO:0000266"/>
    <property type="project" value="RGD"/>
</dbReference>
<dbReference type="GO" id="GO:0048471">
    <property type="term" value="C:perinuclear region of cytoplasm"/>
    <property type="evidence" value="ECO:0000266"/>
    <property type="project" value="RGD"/>
</dbReference>
<dbReference type="GO" id="GO:0005886">
    <property type="term" value="C:plasma membrane"/>
    <property type="evidence" value="ECO:0000314"/>
    <property type="project" value="UniProtKB"/>
</dbReference>
<dbReference type="GO" id="GO:0005791">
    <property type="term" value="C:rough endoplasmic reticulum"/>
    <property type="evidence" value="ECO:0000266"/>
    <property type="project" value="RGD"/>
</dbReference>
<dbReference type="GO" id="GO:0005524">
    <property type="term" value="F:ATP binding"/>
    <property type="evidence" value="ECO:0007669"/>
    <property type="project" value="UniProtKB-KW"/>
</dbReference>
<dbReference type="GO" id="GO:0005003">
    <property type="term" value="F:ephrin receptor activity"/>
    <property type="evidence" value="ECO:0000314"/>
    <property type="project" value="UniProtKB"/>
</dbReference>
<dbReference type="GO" id="GO:0005004">
    <property type="term" value="F:GPI-linked ephrin receptor activity"/>
    <property type="evidence" value="ECO:0000250"/>
    <property type="project" value="UniProtKB"/>
</dbReference>
<dbReference type="GO" id="GO:0019838">
    <property type="term" value="F:growth factor binding"/>
    <property type="evidence" value="ECO:0000353"/>
    <property type="project" value="ARUK-UCL"/>
</dbReference>
<dbReference type="GO" id="GO:0005005">
    <property type="term" value="F:transmembrane-ephrin receptor activity"/>
    <property type="evidence" value="ECO:0000318"/>
    <property type="project" value="GO_Central"/>
</dbReference>
<dbReference type="GO" id="GO:0007411">
    <property type="term" value="P:axon guidance"/>
    <property type="evidence" value="ECO:0000250"/>
    <property type="project" value="UniProtKB"/>
</dbReference>
<dbReference type="GO" id="GO:0071372">
    <property type="term" value="P:cellular response to follicle-stimulating hormone stimulus"/>
    <property type="evidence" value="ECO:0000266"/>
    <property type="project" value="RGD"/>
</dbReference>
<dbReference type="GO" id="GO:1904322">
    <property type="term" value="P:cellular response to forskolin"/>
    <property type="evidence" value="ECO:0000266"/>
    <property type="project" value="RGD"/>
</dbReference>
<dbReference type="GO" id="GO:0060997">
    <property type="term" value="P:dendritic spine morphogenesis"/>
    <property type="evidence" value="ECO:0000314"/>
    <property type="project" value="UniProtKB"/>
</dbReference>
<dbReference type="GO" id="GO:0048013">
    <property type="term" value="P:ephrin receptor signaling pathway"/>
    <property type="evidence" value="ECO:0000314"/>
    <property type="project" value="UniProtKB"/>
</dbReference>
<dbReference type="GO" id="GO:0021766">
    <property type="term" value="P:hippocampus development"/>
    <property type="evidence" value="ECO:0000250"/>
    <property type="project" value="UniProtKB"/>
</dbReference>
<dbReference type="GO" id="GO:0007162">
    <property type="term" value="P:negative regulation of cell adhesion"/>
    <property type="evidence" value="ECO:0000314"/>
    <property type="project" value="MGI"/>
</dbReference>
<dbReference type="GO" id="GO:0048666">
    <property type="term" value="P:neuron development"/>
    <property type="evidence" value="ECO:0000266"/>
    <property type="project" value="RGD"/>
</dbReference>
<dbReference type="GO" id="GO:0032793">
    <property type="term" value="P:positive regulation of CREB transcription factor activity"/>
    <property type="evidence" value="ECO:0000315"/>
    <property type="project" value="UniProtKB"/>
</dbReference>
<dbReference type="GO" id="GO:0032956">
    <property type="term" value="P:regulation of actin cytoskeleton organization"/>
    <property type="evidence" value="ECO:0000250"/>
    <property type="project" value="UniProtKB"/>
</dbReference>
<dbReference type="GO" id="GO:0043087">
    <property type="term" value="P:regulation of GTPase activity"/>
    <property type="evidence" value="ECO:0000250"/>
    <property type="project" value="UniProtKB"/>
</dbReference>
<dbReference type="GO" id="GO:0061178">
    <property type="term" value="P:regulation of insulin secretion involved in cellular response to glucose stimulus"/>
    <property type="evidence" value="ECO:0000250"/>
    <property type="project" value="UniProtKB"/>
</dbReference>
<dbReference type="CDD" id="cd00063">
    <property type="entry name" value="FN3"/>
    <property type="match status" value="2"/>
</dbReference>
<dbReference type="CDD" id="cd05066">
    <property type="entry name" value="PTKc_EphR_A"/>
    <property type="match status" value="1"/>
</dbReference>
<dbReference type="FunFam" id="2.60.40.10:FF:000041">
    <property type="entry name" value="ephrin type-A receptor 3"/>
    <property type="match status" value="1"/>
</dbReference>
<dbReference type="FunFam" id="1.10.510.10:FF:000019">
    <property type="entry name" value="Ephrin type-A receptor 5"/>
    <property type="match status" value="1"/>
</dbReference>
<dbReference type="FunFam" id="2.10.50.10:FF:000001">
    <property type="entry name" value="Ephrin type-A receptor 5"/>
    <property type="match status" value="1"/>
</dbReference>
<dbReference type="FunFam" id="2.60.40.10:FF:000045">
    <property type="entry name" value="Ephrin type-A receptor 5"/>
    <property type="match status" value="1"/>
</dbReference>
<dbReference type="FunFam" id="2.60.40.1770:FF:000001">
    <property type="entry name" value="Ephrin type-A receptor 5"/>
    <property type="match status" value="1"/>
</dbReference>
<dbReference type="FunFam" id="3.30.200.20:FF:000001">
    <property type="entry name" value="Ephrin type-A receptor 5"/>
    <property type="match status" value="1"/>
</dbReference>
<dbReference type="FunFam" id="2.60.120.260:FF:000001">
    <property type="entry name" value="Ephrin type-A receptor 7"/>
    <property type="match status" value="1"/>
</dbReference>
<dbReference type="Gene3D" id="2.60.40.1770">
    <property type="entry name" value="ephrin a2 ectodomain"/>
    <property type="match status" value="1"/>
</dbReference>
<dbReference type="Gene3D" id="2.60.120.260">
    <property type="entry name" value="Galactose-binding domain-like"/>
    <property type="match status" value="1"/>
</dbReference>
<dbReference type="Gene3D" id="2.60.40.10">
    <property type="entry name" value="Immunoglobulins"/>
    <property type="match status" value="2"/>
</dbReference>
<dbReference type="Gene3D" id="3.30.200.20">
    <property type="entry name" value="Phosphorylase Kinase, domain 1"/>
    <property type="match status" value="1"/>
</dbReference>
<dbReference type="Gene3D" id="1.10.150.50">
    <property type="entry name" value="Transcription Factor, Ets-1"/>
    <property type="match status" value="1"/>
</dbReference>
<dbReference type="Gene3D" id="1.10.510.10">
    <property type="entry name" value="Transferase(Phosphotransferase) domain 1"/>
    <property type="match status" value="1"/>
</dbReference>
<dbReference type="Gene3D" id="2.10.50.10">
    <property type="entry name" value="Tumor Necrosis Factor Receptor, subunit A, domain 2"/>
    <property type="match status" value="1"/>
</dbReference>
<dbReference type="InterPro" id="IPR027936">
    <property type="entry name" value="Eph_TM"/>
</dbReference>
<dbReference type="InterPro" id="IPR001090">
    <property type="entry name" value="Ephrin_rcpt_lig-bd_dom"/>
</dbReference>
<dbReference type="InterPro" id="IPR050449">
    <property type="entry name" value="Ephrin_rcpt_TKs"/>
</dbReference>
<dbReference type="InterPro" id="IPR003961">
    <property type="entry name" value="FN3_dom"/>
</dbReference>
<dbReference type="InterPro" id="IPR036116">
    <property type="entry name" value="FN3_sf"/>
</dbReference>
<dbReference type="InterPro" id="IPR008979">
    <property type="entry name" value="Galactose-bd-like_sf"/>
</dbReference>
<dbReference type="InterPro" id="IPR009030">
    <property type="entry name" value="Growth_fac_rcpt_cys_sf"/>
</dbReference>
<dbReference type="InterPro" id="IPR013783">
    <property type="entry name" value="Ig-like_fold"/>
</dbReference>
<dbReference type="InterPro" id="IPR011009">
    <property type="entry name" value="Kinase-like_dom_sf"/>
</dbReference>
<dbReference type="InterPro" id="IPR000719">
    <property type="entry name" value="Prot_kinase_dom"/>
</dbReference>
<dbReference type="InterPro" id="IPR001660">
    <property type="entry name" value="SAM"/>
</dbReference>
<dbReference type="InterPro" id="IPR013761">
    <property type="entry name" value="SAM/pointed_sf"/>
</dbReference>
<dbReference type="InterPro" id="IPR001245">
    <property type="entry name" value="Ser-Thr/Tyr_kinase_cat_dom"/>
</dbReference>
<dbReference type="InterPro" id="IPR011641">
    <property type="entry name" value="Tyr-kin_ephrin_A/B_rcpt-like"/>
</dbReference>
<dbReference type="InterPro" id="IPR008266">
    <property type="entry name" value="Tyr_kinase_AS"/>
</dbReference>
<dbReference type="InterPro" id="IPR020635">
    <property type="entry name" value="Tyr_kinase_cat_dom"/>
</dbReference>
<dbReference type="InterPro" id="IPR016257">
    <property type="entry name" value="Tyr_kinase_ephrin_rcpt"/>
</dbReference>
<dbReference type="InterPro" id="IPR001426">
    <property type="entry name" value="Tyr_kinase_rcpt_V_CS"/>
</dbReference>
<dbReference type="PANTHER" id="PTHR46877">
    <property type="entry name" value="EPH RECEPTOR A5"/>
    <property type="match status" value="1"/>
</dbReference>
<dbReference type="PANTHER" id="PTHR46877:SF13">
    <property type="entry name" value="EPHRIN TYPE-A RECEPTOR 5"/>
    <property type="match status" value="1"/>
</dbReference>
<dbReference type="Pfam" id="PF14575">
    <property type="entry name" value="EphA2_TM"/>
    <property type="match status" value="1"/>
</dbReference>
<dbReference type="Pfam" id="PF01404">
    <property type="entry name" value="Ephrin_lbd"/>
    <property type="match status" value="1"/>
</dbReference>
<dbReference type="Pfam" id="PF07699">
    <property type="entry name" value="Ephrin_rec_like"/>
    <property type="match status" value="1"/>
</dbReference>
<dbReference type="Pfam" id="PF00041">
    <property type="entry name" value="fn3"/>
    <property type="match status" value="2"/>
</dbReference>
<dbReference type="Pfam" id="PF07714">
    <property type="entry name" value="PK_Tyr_Ser-Thr"/>
    <property type="match status" value="1"/>
</dbReference>
<dbReference type="Pfam" id="PF00536">
    <property type="entry name" value="SAM_1"/>
    <property type="match status" value="1"/>
</dbReference>
<dbReference type="PIRSF" id="PIRSF000666">
    <property type="entry name" value="TyrPK_ephrin_receptor"/>
    <property type="match status" value="1"/>
</dbReference>
<dbReference type="PRINTS" id="PR00014">
    <property type="entry name" value="FNTYPEIII"/>
</dbReference>
<dbReference type="PRINTS" id="PR00109">
    <property type="entry name" value="TYRKINASE"/>
</dbReference>
<dbReference type="SMART" id="SM00615">
    <property type="entry name" value="EPH_lbd"/>
    <property type="match status" value="1"/>
</dbReference>
<dbReference type="SMART" id="SM01411">
    <property type="entry name" value="Ephrin_rec_like"/>
    <property type="match status" value="1"/>
</dbReference>
<dbReference type="SMART" id="SM00060">
    <property type="entry name" value="FN3"/>
    <property type="match status" value="2"/>
</dbReference>
<dbReference type="SMART" id="SM00219">
    <property type="entry name" value="TyrKc"/>
    <property type="match status" value="1"/>
</dbReference>
<dbReference type="SUPFAM" id="SSF49265">
    <property type="entry name" value="Fibronectin type III"/>
    <property type="match status" value="1"/>
</dbReference>
<dbReference type="SUPFAM" id="SSF49785">
    <property type="entry name" value="Galactose-binding domain-like"/>
    <property type="match status" value="1"/>
</dbReference>
<dbReference type="SUPFAM" id="SSF57184">
    <property type="entry name" value="Growth factor receptor domain"/>
    <property type="match status" value="1"/>
</dbReference>
<dbReference type="SUPFAM" id="SSF56112">
    <property type="entry name" value="Protein kinase-like (PK-like)"/>
    <property type="match status" value="1"/>
</dbReference>
<dbReference type="SUPFAM" id="SSF47769">
    <property type="entry name" value="SAM/Pointed domain"/>
    <property type="match status" value="1"/>
</dbReference>
<dbReference type="PROSITE" id="PS01186">
    <property type="entry name" value="EGF_2"/>
    <property type="match status" value="1"/>
</dbReference>
<dbReference type="PROSITE" id="PS51550">
    <property type="entry name" value="EPH_LBD"/>
    <property type="match status" value="1"/>
</dbReference>
<dbReference type="PROSITE" id="PS50853">
    <property type="entry name" value="FN3"/>
    <property type="match status" value="2"/>
</dbReference>
<dbReference type="PROSITE" id="PS50011">
    <property type="entry name" value="PROTEIN_KINASE_DOM"/>
    <property type="match status" value="1"/>
</dbReference>
<dbReference type="PROSITE" id="PS00109">
    <property type="entry name" value="PROTEIN_KINASE_TYR"/>
    <property type="match status" value="1"/>
</dbReference>
<dbReference type="PROSITE" id="PS00790">
    <property type="entry name" value="RECEPTOR_TYR_KIN_V_1"/>
    <property type="match status" value="1"/>
</dbReference>
<dbReference type="PROSITE" id="PS00791">
    <property type="entry name" value="RECEPTOR_TYR_KIN_V_2"/>
    <property type="match status" value="1"/>
</dbReference>
<dbReference type="PROSITE" id="PS50105">
    <property type="entry name" value="SAM_DOMAIN"/>
    <property type="match status" value="1"/>
</dbReference>
<evidence type="ECO:0000250" key="1"/>
<evidence type="ECO:0000250" key="2">
    <source>
        <dbReference type="UniProtKB" id="P54756"/>
    </source>
</evidence>
<evidence type="ECO:0000250" key="3">
    <source>
        <dbReference type="UniProtKB" id="Q60629"/>
    </source>
</evidence>
<evidence type="ECO:0000255" key="4"/>
<evidence type="ECO:0000255" key="5">
    <source>
        <dbReference type="PROSITE-ProRule" id="PRU00159"/>
    </source>
</evidence>
<evidence type="ECO:0000255" key="6">
    <source>
        <dbReference type="PROSITE-ProRule" id="PRU00184"/>
    </source>
</evidence>
<evidence type="ECO:0000255" key="7">
    <source>
        <dbReference type="PROSITE-ProRule" id="PRU00316"/>
    </source>
</evidence>
<evidence type="ECO:0000255" key="8">
    <source>
        <dbReference type="PROSITE-ProRule" id="PRU00883"/>
    </source>
</evidence>
<evidence type="ECO:0000255" key="9">
    <source>
        <dbReference type="PROSITE-ProRule" id="PRU10028"/>
    </source>
</evidence>
<evidence type="ECO:0000256" key="10">
    <source>
        <dbReference type="SAM" id="MobiDB-lite"/>
    </source>
</evidence>
<evidence type="ECO:0000269" key="11">
    <source>
    </source>
</evidence>
<evidence type="ECO:0000269" key="12">
    <source>
    </source>
</evidence>
<evidence type="ECO:0000269" key="13">
    <source>
    </source>
</evidence>
<evidence type="ECO:0000303" key="14">
    <source>
    </source>
</evidence>
<evidence type="ECO:0000303" key="15">
    <source>
    </source>
</evidence>
<evidence type="ECO:0000305" key="16"/>
<feature type="signal peptide" evidence="1">
    <location>
        <begin position="1"/>
        <end position="26"/>
    </location>
</feature>
<feature type="chain" id="PRO_0000016814" description="Ephrin type-A receptor 5">
    <location>
        <begin position="27"/>
        <end position="1005"/>
    </location>
</feature>
<feature type="topological domain" description="Extracellular" evidence="4">
    <location>
        <begin position="27"/>
        <end position="575"/>
    </location>
</feature>
<feature type="transmembrane region" description="Helical" evidence="4">
    <location>
        <begin position="576"/>
        <end position="596"/>
    </location>
</feature>
<feature type="topological domain" description="Cytoplasmic" evidence="4">
    <location>
        <begin position="597"/>
        <end position="1005"/>
    </location>
</feature>
<feature type="domain" description="Eph LBD" evidence="8">
    <location>
        <begin position="62"/>
        <end position="240"/>
    </location>
</feature>
<feature type="domain" description="Fibronectin type-III 1" evidence="7">
    <location>
        <begin position="359"/>
        <end position="469"/>
    </location>
</feature>
<feature type="domain" description="Fibronectin type-III 2" evidence="7">
    <location>
        <begin position="470"/>
        <end position="564"/>
    </location>
</feature>
<feature type="domain" description="Protein kinase" evidence="5">
    <location>
        <begin position="677"/>
        <end position="938"/>
    </location>
</feature>
<feature type="domain" description="SAM" evidence="6">
    <location>
        <begin position="967"/>
        <end position="1005"/>
    </location>
</feature>
<feature type="region of interest" description="Disordered" evidence="10">
    <location>
        <begin position="1"/>
        <end position="24"/>
    </location>
</feature>
<feature type="active site" description="Proton acceptor" evidence="5 9">
    <location>
        <position position="802"/>
    </location>
</feature>
<feature type="binding site" evidence="5">
    <location>
        <begin position="683"/>
        <end position="691"/>
    </location>
    <ligand>
        <name>ATP</name>
        <dbReference type="ChEBI" id="CHEBI:30616"/>
    </ligand>
</feature>
<feature type="binding site" evidence="5">
    <location>
        <position position="709"/>
    </location>
    <ligand>
        <name>ATP</name>
        <dbReference type="ChEBI" id="CHEBI:30616"/>
    </ligand>
</feature>
<feature type="modified residue" description="Phosphotyrosine; by autocatalysis" evidence="1">
    <location>
        <position position="652"/>
    </location>
</feature>
<feature type="modified residue" description="Phosphotyrosine; by autocatalysis" evidence="1">
    <location>
        <position position="658"/>
    </location>
</feature>
<feature type="modified residue" description="Phosphotyrosine; by autocatalysis" evidence="4">
    <location>
        <position position="835"/>
    </location>
</feature>
<feature type="modified residue" description="Phosphotyrosine; by autocatalysis" evidence="1">
    <location>
        <position position="984"/>
    </location>
</feature>
<feature type="glycosylation site" description="N-linked (GlcNAc...) asparagine" evidence="4">
    <location>
        <position position="266"/>
    </location>
</feature>
<feature type="glycosylation site" description="N-linked (GlcNAc...) asparagine" evidence="4">
    <location>
        <position position="301"/>
    </location>
</feature>
<feature type="glycosylation site" description="N-linked (GlcNAc...) asparagine" evidence="4">
    <location>
        <position position="371"/>
    </location>
</feature>
<feature type="glycosylation site" description="N-linked (GlcNAc...) asparagine" evidence="4">
    <location>
        <position position="425"/>
    </location>
</feature>
<feature type="glycosylation site" description="N-linked (GlcNAc...) asparagine" evidence="4">
    <location>
        <position position="438"/>
    </location>
</feature>
<feature type="glycosylation site" description="N-linked (GlcNAc...) asparagine" evidence="4">
    <location>
        <position position="463"/>
    </location>
</feature>
<feature type="splice variant" id="VSP_003001" description="In isoform 2 and isoform 5." evidence="14">
    <original>VCRPGFFKASPHSQTCSKCPPHSYTHEEASTSCVCEKDYFRRESDPPTMACT</original>
    <variation>G</variation>
    <location>
        <begin position="306"/>
        <end position="357"/>
    </location>
</feature>
<feature type="splice variant" id="VSP_003002" description="In isoform 3, isoform 4 and isoform 5." evidence="14 15">
    <original>RPPSAPRNAISNVNETSVFLEWIPPADTGGGKDVSYYILCKKCNSHAGVCEECGGHVRYLPQQIGLKNTSVMMADPLAHTNYTFEIEAVNGVSDLSPGTRQYVSVNVTTNQAA</original>
    <variation>T</variation>
    <location>
        <begin position="358"/>
        <end position="470"/>
    </location>
</feature>
<feature type="splice variant" id="VSP_003003" description="In isoform 4 and isoform 5." evidence="14">
    <original>SGSCCECGCGRASSLCAVAHPSLIW</original>
    <variation>R</variation>
    <location>
        <begin position="597"/>
        <end position="621"/>
    </location>
</feature>
<feature type="sequence conflict" description="In Ref. 2; CAA55357." evidence="16" ref="2">
    <original>D</original>
    <variation>E</variation>
    <location>
        <position position="170"/>
    </location>
</feature>
<feature type="sequence conflict" description="In Ref. 2; CAA55357." evidence="16" ref="2">
    <original>G</original>
    <variation>A</variation>
    <location>
        <position position="566"/>
    </location>
</feature>
<feature type="sequence conflict" description="In Ref. 2; CAA55357." evidence="16" ref="2">
    <original>G</original>
    <variation>A</variation>
    <location>
        <position position="578"/>
    </location>
</feature>
<feature type="sequence conflict" description="In Ref. 2; CAA55357." evidence="16" ref="2">
    <original>G</original>
    <variation>A</variation>
    <location>
        <position position="669"/>
    </location>
</feature>
<feature type="sequence conflict" description="In Ref. 2; CAA55357." evidence="16" ref="2">
    <original>T</original>
    <variation>I</variation>
    <location>
        <position position="708"/>
    </location>
</feature>
<feature type="sequence conflict" description="In Ref. 2; CAA55357." evidence="16" ref="2">
    <original>T</original>
    <variation>I</variation>
    <location>
        <position position="979"/>
    </location>
</feature>
<comment type="function">
    <text evidence="1 11 12 13">Receptor tyrosine kinase which binds promiscuously GPI-anchored ephrin-A family ligands residing on adjacent cells, leading to contact-dependent bidirectional signaling into neighboring cells. The signaling pathway downstream of the receptor is referred to as forward signaling while the signaling pathway downstream of the ephrin ligand is referred to as reverse signaling. Among GPI-anchored ephrin-A ligands, EFNA5 most probably constitutes the cognate/functional ligand for EPHA5. Functions as an axon guidance molecule during development and may be involved in the development of the retinotectal, entorhino-hippocampal and hippocamposeptal pathways. Together with EFNA5 plays also a role in synaptic plasticity in adult brain through regulation of synaptogenesis. In addition to its function in the nervous system, the interaction of EPHA5 with EFNA5 mediates communication between pancreatic islet cells to regulate glucose-stimulated insulin secretion (By similarity).</text>
</comment>
<comment type="catalytic activity">
    <reaction evidence="9">
        <text>L-tyrosyl-[protein] + ATP = O-phospho-L-tyrosyl-[protein] + ADP + H(+)</text>
        <dbReference type="Rhea" id="RHEA:10596"/>
        <dbReference type="Rhea" id="RHEA-COMP:10136"/>
        <dbReference type="Rhea" id="RHEA-COMP:20101"/>
        <dbReference type="ChEBI" id="CHEBI:15378"/>
        <dbReference type="ChEBI" id="CHEBI:30616"/>
        <dbReference type="ChEBI" id="CHEBI:46858"/>
        <dbReference type="ChEBI" id="CHEBI:61978"/>
        <dbReference type="ChEBI" id="CHEBI:456216"/>
        <dbReference type="EC" id="2.7.10.1"/>
    </reaction>
</comment>
<comment type="subunit">
    <text evidence="1 3">Heterotetramer upon binding of the ligand. The heterotetramer is composed of an ephrin dimer and a receptor dimer. Oligomerization is probably required to induce biological responses (By similarity). Interacts (via SAM domain) with SAMD5 (via SAM domain) (By similarity).</text>
</comment>
<comment type="subcellular location">
    <subcellularLocation>
        <location evidence="11 12">Cell membrane</location>
        <topology evidence="4">Single-pass type I membrane protein</topology>
    </subcellularLocation>
    <subcellularLocation>
        <location evidence="11 12">Cell projection</location>
        <location evidence="11 12">Axon</location>
    </subcellularLocation>
    <subcellularLocation>
        <location evidence="2">Cell projection</location>
        <location evidence="2">Dendrite</location>
    </subcellularLocation>
</comment>
<comment type="alternative products">
    <event type="alternative splicing"/>
    <isoform>
        <id>P54757-1</id>
        <name>1</name>
        <sequence type="displayed"/>
    </isoform>
    <isoform>
        <id>P54757-2</id>
        <name>2</name>
        <sequence type="described" ref="VSP_003001"/>
    </isoform>
    <isoform>
        <id>P54757-3</id>
        <name>3</name>
        <sequence type="described" ref="VSP_003002"/>
    </isoform>
    <isoform>
        <id>P54757-4</id>
        <name>4</name>
        <sequence type="described" ref="VSP_003002 VSP_003003"/>
    </isoform>
    <isoform>
        <id>P54757-5</id>
        <name>5</name>
        <sequence type="described" ref="VSP_003001 VSP_003002 VSP_003003"/>
    </isoform>
</comment>
<comment type="tissue specificity">
    <text evidence="13">Almost exclusively expressed in the nervous system. Predominantly expressed in neurons.</text>
</comment>
<comment type="PTM">
    <text evidence="1">Phosphorylated. Phosphorylation is stimulated by the ligand EFNA5. Dephosphorylation upon stimulation by glucose, inhibits EPHA5 forward signaling and results in insulin secretion (By similarity).</text>
</comment>
<comment type="similarity">
    <text evidence="5">Belongs to the protein kinase superfamily. Tyr protein kinase family. Ephrin receptor subfamily.</text>
</comment>
<comment type="sequence caution" evidence="16">
    <molecule>Isoform 3</molecule>
    <conflict type="frameshift">
        <sequence resource="EMBL-CDS" id="CAA55357"/>
    </conflict>
</comment>
<reference key="1">
    <citation type="journal article" date="1993" name="Oncogene">
        <title>Ehk-1 and Ehk-2: two novel members of the Eph receptor-like tyrosine kinase family with distinctive structures and neuronal expression.</title>
        <authorList>
            <person name="Maisonpierre P.C."/>
            <person name="Barrezueta N.X."/>
            <person name="Yancopoulos G.D."/>
        </authorList>
    </citation>
    <scope>NUCLEOTIDE SEQUENCE [MRNA] (ISOFORMS 1; 2; 3; 4 AND 5)</scope>
    <source>
        <strain>Sprague-Dawley</strain>
        <tissue>Brain</tissue>
    </source>
</reference>
<reference key="2">
    <citation type="journal article" date="1994" name="Neuroscience">
        <title>Expression and developmental regulation of Ehk-1, a neuronal Elk-like receptor tyrosine kinase in brain.</title>
        <authorList>
            <person name="Taylor V."/>
            <person name="Miescher G.C."/>
            <person name="Pfarr S."/>
            <person name="Honegger P."/>
            <person name="Breitschopf H."/>
            <person name="Lassmann H."/>
            <person name="Steck A.J."/>
        </authorList>
    </citation>
    <scope>NUCLEOTIDE SEQUENCE [MRNA] (ISOFORM 3)</scope>
    <source>
        <strain>Sprague-Dawley</strain>
        <tissue>Brain</tissue>
    </source>
</reference>
<reference key="3">
    <citation type="journal article" date="1995" name="Neuron">
        <title>Cloning of AL-1, a ligand for an Eph-related tyrosine kinase receptor involved in axon bundle formation.</title>
        <authorList>
            <person name="Winslow J.W."/>
            <person name="Moran P."/>
            <person name="Valverde J."/>
            <person name="Shih A."/>
            <person name="Yuan J.Q."/>
            <person name="Wong S.C."/>
            <person name="Tsai S.P."/>
            <person name="Goddard A."/>
            <person name="Henzel W.J."/>
            <person name="Hefti F."/>
            <person name="Beck K.D."/>
            <person name="Caras I.W."/>
        </authorList>
    </citation>
    <scope>FUNCTION IN AXON GUIDANCE</scope>
    <scope>SUBCELLULAR LOCATION</scope>
</reference>
<reference key="4">
    <citation type="journal article" date="1998" name="Mol. Cell. Neurosci.">
        <title>Regulation of hippocampal synaptic plasticity by the tyrosine kinase receptor, REK7/EphA5, and its ligand, AL-1/Ephrin-A5.</title>
        <authorList>
            <person name="Gao W.Q."/>
            <person name="Shinsky N."/>
            <person name="Armanini M.P."/>
            <person name="Moran P."/>
            <person name="Zheng J.L."/>
            <person name="Mendoza-Ramirez J.L."/>
            <person name="Phillips H.S."/>
            <person name="Winslow J.W."/>
            <person name="Caras I.W."/>
        </authorList>
    </citation>
    <scope>FUNCTION IN SYNAPTIC PLASTICITY</scope>
    <scope>TISSUE SPECIFICITY</scope>
</reference>
<reference key="5">
    <citation type="journal article" date="2010" name="PLoS ONE">
        <title>Ephrin-A5 and EphA5 interaction induces synaptogenesis during early hippocampal development.</title>
        <authorList>
            <person name="Akaneya Y."/>
            <person name="Sohya K."/>
            <person name="Kitamura A."/>
            <person name="Kimura F."/>
            <person name="Washburn C."/>
            <person name="Zhou R."/>
            <person name="Ninan I."/>
            <person name="Tsumoto T."/>
            <person name="Ziff E.B."/>
        </authorList>
    </citation>
    <scope>FUNCTION IN SYNAPTOGENESIS</scope>
    <scope>EFNA5 LIGAND-BINDING</scope>
    <scope>SUBCELLULAR LOCATION</scope>
    <scope>PHOSPHORYLATION</scope>
</reference>
<gene>
    <name type="primary">Epha5</name>
    <name type="synonym">Ehk-1</name>
    <name type="synonym">Ekh1</name>
    <name type="synonym">Rek7</name>
</gene>